<gene>
    <name type="primary">Slco1a3</name>
    <name type="synonym">Oatp1a3</name>
    <name type="synonym">Slc21a4</name>
</gene>
<organism>
    <name type="scientific">Rattus norvegicus</name>
    <name type="common">Rat</name>
    <dbReference type="NCBI Taxonomy" id="10116"/>
    <lineage>
        <taxon>Eukaryota</taxon>
        <taxon>Metazoa</taxon>
        <taxon>Chordata</taxon>
        <taxon>Craniata</taxon>
        <taxon>Vertebrata</taxon>
        <taxon>Euteleostomi</taxon>
        <taxon>Mammalia</taxon>
        <taxon>Eutheria</taxon>
        <taxon>Euarchontoglires</taxon>
        <taxon>Glires</taxon>
        <taxon>Rodentia</taxon>
        <taxon>Myomorpha</taxon>
        <taxon>Muroidea</taxon>
        <taxon>Muridae</taxon>
        <taxon>Murinae</taxon>
        <taxon>Rattus</taxon>
    </lineage>
</organism>
<name>SO1A3_RAT</name>
<sequence length="670" mass="73817">MGDLEKGAATHGAGCFAKIKVFLMALTCAYVSKSLSGTFMSSMLTQIERQFGIPTAIVGFINGSFEIGNLLLIIFVSYFGMKLHRPIVIGVGCAVMGLGCFIISLPHFLMGRYEYETTILPTSNLSSNSFLCMENQTQTLNPAQDPAECVKEVKSLMWIYVLVGNIIRGIGETPIMPLGVSYIENFAKSENSPLYIGILETGKMIGPIFGLLLGSFCASIYVDTGSVNTDDLTITPTDIRWVGAWWIGFLVCAGVNILISIPFFFFPKTLPKEGLQENVDGTENAKEESTEKRPRKKNRGITKDFFPFLKSPVLQPDLHAVHPYKVLQVNAFNIYFSFLPKYLENQYGKSTAEVIFLMGVYNLPAICIGYLIAGFMMKKFKITVKTAAFLAFCLSLSEYSFGFCNFLITCDNVPVAGLTNSYERDQKPLYLENNVLADCNTRCSCLTKTWDPVCGDNGLAYMSACLAGCEKSVGTGTNMVFHNCSCIQSPGNSSAVLGLCNKGPECTNKLQYLLILSGFLSILYSFAAIPGYMVFLRCIKSEEKSLGIGIHAFCIRVFAGIPAPIYFGALIDRTCLHWGTQKCGAPGACRMYDINSFRRIYLGMSAALRGSSYLPAFVIVILTRKFSLPGKINSSEMEIAEMKLTEKESQCTDVHRNPKFKNDGELKTKL</sequence>
<proteinExistence type="evidence at transcript level"/>
<comment type="function">
    <text>Mediates the Na(+)-independent transport of organic anions such as methotrexate, taurocholate, folate and prostaglandin E2. May contribute to renal secretion and/or reabsorption of hydrophobic anionic compounds. Mediates renal clearance of methotrexate from the blood.</text>
</comment>
<comment type="subcellular location">
    <subcellularLocation>
        <location>Cell membrane</location>
        <topology>Multi-pass membrane protein</topology>
    </subcellularLocation>
</comment>
<comment type="alternative products">
    <event type="alternative splicing"/>
    <isoform>
        <id>P70502-1</id>
        <name>1</name>
        <sequence type="displayed"/>
    </isoform>
    <isoform>
        <id>P70502-2</id>
        <name>2</name>
        <name>K1</name>
        <sequence type="described" ref="VSP_006143 VSP_006145"/>
    </isoform>
    <isoform>
        <id>P70502-3</id>
        <name>3</name>
        <name>K5</name>
        <sequence type="described" ref="VSP_006133 VSP_006143 VSP_006145"/>
    </isoform>
    <isoform>
        <id>P70502-4</id>
        <name>4</name>
        <name>K6</name>
        <sequence type="described" ref="VSP_006143 VSP_006144"/>
    </isoform>
    <isoform>
        <id>P70502-5</id>
        <name>5</name>
        <name>K14</name>
        <sequence type="described" ref="VSP_006134 VSP_006140 VSP_006143 VSP_006145"/>
    </isoform>
    <isoform>
        <id>P70502-6</id>
        <name>6</name>
        <name>K3</name>
        <sequence type="described" ref="VSP_006133 VSP_006143 VSP_006144"/>
    </isoform>
    <isoform>
        <id>P70502-7</id>
        <name>7</name>
        <name>K8</name>
        <sequence type="described" ref="VSP_006135 VSP_006141 VSP_006143 VSP_006145"/>
    </isoform>
    <isoform>
        <id>P70502-8</id>
        <name>8</name>
        <name>K2</name>
        <sequence type="described" ref="VSP_006136 VSP_006143 VSP_006145"/>
    </isoform>
    <isoform>
        <id>P70502-9</id>
        <name>9</name>
        <name>K4</name>
        <name>K13</name>
        <sequence type="described" ref="VSP_006139 VSP_006146"/>
    </isoform>
    <isoform>
        <id>P70502-10</id>
        <name>10</name>
        <name>K12</name>
        <sequence type="described" ref="VSP_006137 VSP_006143 VSP_006144"/>
    </isoform>
    <isoform>
        <id>P70502-11</id>
        <name>11</name>
        <name>K7</name>
        <sequence type="described" ref="VSP_006136 VSP_006143 VSP_006144"/>
    </isoform>
    <isoform>
        <id>P70502-12</id>
        <name>12</name>
        <name>K11</name>
        <sequence type="described" ref="VSP_006135 VSP_006141 VSP_006143 VSP_006144"/>
    </isoform>
    <isoform>
        <id>P70502-13</id>
        <name>13</name>
        <name>K2</name>
        <sequence type="described" ref="VSP_006138 VSP_006142 VSP_006143 VSP_006145"/>
    </isoform>
    <isoform>
        <id>P70502-14</id>
        <name>14</name>
        <name>K9</name>
        <sequence type="described" ref="VSP_006137 VSP_006143 VSP_006145"/>
    </isoform>
    <isoform>
        <id>P70502-15</id>
        <name>15</name>
        <name>K10</name>
        <sequence type="described" ref="VSP_006134 VSP_006140 VSP_006143 VSP_006144"/>
    </isoform>
</comment>
<comment type="tissue specificity">
    <text>All isoforms are detected in kidney, and many are kidney specific. Isoforms 2 and 13 are also detected in liver. Isoforms 4 and 9/K4 are ubiquitous, but isoform 9/K13 is kidney specific. Isoforms 5 and 14 are detected in all tissues tested, with the exception of pancreas and spleen. Isoforms 11 and 15 are detected in kidney, pancreas and testis. Isoform 7 is detected in kidney, liver, testis and spleen.</text>
</comment>
<comment type="similarity">
    <text evidence="6">Belongs to the organo anion transporter (TC 2.A.60) family.</text>
</comment>
<accession>P70502</accession>
<accession>Q8R008</accession>
<accession>Q8R4J0</accession>
<accession>Q8R4J1</accession>
<accession>Q8R4J2</accession>
<accession>Q8R4J3</accession>
<accession>Q8R4J4</accession>
<accession>Q8R4J5</accession>
<accession>Q8R4J6</accession>
<accession>Q8R4J7</accession>
<accession>Q8R4J8</accession>
<accession>Q8R4J9</accession>
<accession>Q8R4K0</accession>
<accession>Q8R4K1</accession>
<accession>Q9WTM0</accession>
<feature type="chain" id="PRO_0000191045" description="Solute carrier organic anion transporter family member 1A3">
    <location>
        <begin position="1"/>
        <end position="670"/>
    </location>
</feature>
<feature type="topological domain" description="Cytoplasmic" evidence="1">
    <location>
        <begin position="1"/>
        <end position="20"/>
    </location>
</feature>
<feature type="transmembrane region" description="Helical; Name=1" evidence="1">
    <location>
        <begin position="21"/>
        <end position="40"/>
    </location>
</feature>
<feature type="topological domain" description="Extracellular" evidence="1">
    <location>
        <begin position="41"/>
        <end position="59"/>
    </location>
</feature>
<feature type="transmembrane region" description="Helical; Name=2" evidence="1">
    <location>
        <begin position="60"/>
        <end position="80"/>
    </location>
</feature>
<feature type="topological domain" description="Cytoplasmic" evidence="1">
    <location>
        <begin position="81"/>
        <end position="86"/>
    </location>
</feature>
<feature type="transmembrane region" description="Helical; Name=3" evidence="1">
    <location>
        <begin position="87"/>
        <end position="111"/>
    </location>
</feature>
<feature type="topological domain" description="Extracellular" evidence="1">
    <location>
        <begin position="112"/>
        <end position="155"/>
    </location>
</feature>
<feature type="transmembrane region" description="Helical; Name=4" evidence="1">
    <location>
        <begin position="156"/>
        <end position="184"/>
    </location>
</feature>
<feature type="topological domain" description="Cytoplasmic" evidence="1">
    <location>
        <begin position="185"/>
        <end position="203"/>
    </location>
</feature>
<feature type="transmembrane region" description="Helical; Name=5" evidence="1">
    <location>
        <begin position="204"/>
        <end position="224"/>
    </location>
</feature>
<feature type="topological domain" description="Extracellular" evidence="1">
    <location>
        <begin position="225"/>
        <end position="242"/>
    </location>
</feature>
<feature type="transmembrane region" description="Helical; Name=6" evidence="1">
    <location>
        <begin position="243"/>
        <end position="267"/>
    </location>
</feature>
<feature type="topological domain" description="Cytoplasmic" evidence="1">
    <location>
        <begin position="268"/>
        <end position="311"/>
    </location>
</feature>
<feature type="transmembrane region" description="Helical; Name=7" evidence="1">
    <location>
        <begin position="312"/>
        <end position="333"/>
    </location>
</feature>
<feature type="topological domain" description="Extracellular" evidence="1">
    <location>
        <begin position="334"/>
        <end position="353"/>
    </location>
</feature>
<feature type="transmembrane region" description="Helical; Name=8" evidence="1">
    <location>
        <begin position="354"/>
        <end position="377"/>
    </location>
</feature>
<feature type="topological domain" description="Cytoplasmic" evidence="1">
    <location>
        <begin position="378"/>
        <end position="381"/>
    </location>
</feature>
<feature type="transmembrane region" description="Helical; Name=9" evidence="1">
    <location>
        <begin position="382"/>
        <end position="405"/>
    </location>
</feature>
<feature type="topological domain" description="Extracellular" evidence="1">
    <location>
        <begin position="406"/>
        <end position="513"/>
    </location>
</feature>
<feature type="transmembrane region" description="Helical; Name=10" evidence="1">
    <location>
        <begin position="514"/>
        <end position="536"/>
    </location>
</feature>
<feature type="topological domain" description="Cytoplasmic" evidence="1">
    <location>
        <begin position="537"/>
        <end position="545"/>
    </location>
</feature>
<feature type="transmembrane region" description="Helical; Name=11" evidence="1">
    <location>
        <begin position="546"/>
        <end position="571"/>
    </location>
</feature>
<feature type="topological domain" description="Extracellular" evidence="1">
    <location>
        <begin position="572"/>
        <end position="605"/>
    </location>
</feature>
<feature type="transmembrane region" description="Helical; Name=12" evidence="1">
    <location>
        <begin position="606"/>
        <end position="623"/>
    </location>
</feature>
<feature type="topological domain" description="Cytoplasmic" evidence="1">
    <location>
        <begin position="624"/>
        <end position="670"/>
    </location>
</feature>
<feature type="domain" description="Kazal-like" evidence="2">
    <location>
        <begin position="433"/>
        <end position="488"/>
    </location>
</feature>
<feature type="region of interest" description="Disordered" evidence="3">
    <location>
        <begin position="277"/>
        <end position="296"/>
    </location>
</feature>
<feature type="compositionally biased region" description="Basic and acidic residues" evidence="3">
    <location>
        <begin position="283"/>
        <end position="292"/>
    </location>
</feature>
<feature type="glycosylation site" description="N-linked (GlcNAc...) asparagine" evidence="1">
    <location>
        <position position="124"/>
    </location>
</feature>
<feature type="glycosylation site" description="N-linked (GlcNAc...) asparagine" evidence="1">
    <location>
        <position position="135"/>
    </location>
</feature>
<feature type="glycosylation site" description="N-linked (GlcNAc...) asparagine" evidence="1">
    <location>
        <position position="483"/>
    </location>
</feature>
<feature type="glycosylation site" description="N-linked (GlcNAc...) asparagine" evidence="1">
    <location>
        <position position="492"/>
    </location>
</feature>
<feature type="disulfide bond" evidence="2">
    <location>
        <begin position="439"/>
        <end position="469"/>
    </location>
</feature>
<feature type="disulfide bond" evidence="2">
    <location>
        <begin position="445"/>
        <end position="465"/>
    </location>
</feature>
<feature type="disulfide bond" evidence="2">
    <location>
        <begin position="454"/>
        <end position="486"/>
    </location>
</feature>
<feature type="splice variant" id="VSP_006139" description="In isoform 9." evidence="5">
    <location>
        <begin position="1"/>
        <end position="318"/>
    </location>
</feature>
<feature type="splice variant" id="VSP_006138" description="In isoform 13." evidence="4">
    <location>
        <begin position="1"/>
        <end position="172"/>
    </location>
</feature>
<feature type="splice variant" id="VSP_006137" description="In isoform 10 and isoform 14." evidence="5">
    <location>
        <begin position="1"/>
        <end position="156"/>
    </location>
</feature>
<feature type="splice variant" id="VSP_006136" description="In isoform 8 and isoform 11." evidence="5">
    <location>
        <begin position="1"/>
        <end position="132"/>
    </location>
</feature>
<feature type="splice variant" id="VSP_006135" description="In isoform 7 and isoform 12." evidence="5">
    <location>
        <begin position="1"/>
        <end position="102"/>
    </location>
</feature>
<feature type="splice variant" id="VSP_006134" description="In isoform 5 and isoform 15." evidence="5">
    <location>
        <begin position="1"/>
        <end position="61"/>
    </location>
</feature>
<feature type="splice variant" id="VSP_006133" description="In isoform 3 and isoform 6." evidence="5">
    <location>
        <begin position="1"/>
        <end position="23"/>
    </location>
</feature>
<feature type="splice variant" id="VSP_006140" description="In isoform 5 and isoform 15." evidence="5">
    <original>NGSFEI</original>
    <variation>MLCQDQ</variation>
    <location>
        <begin position="62"/>
        <end position="67"/>
    </location>
</feature>
<feature type="splice variant" id="VSP_006141" description="In isoform 7 and isoform 12." evidence="5">
    <original>ISLPHFLMG</original>
    <variation>MGPDALPRS</variation>
    <location>
        <begin position="103"/>
        <end position="111"/>
    </location>
</feature>
<feature type="splice variant" id="VSP_006142" description="In isoform 13." evidence="4">
    <original>T</original>
    <variation>M</variation>
    <location>
        <position position="173"/>
    </location>
</feature>
<feature type="splice variant" id="VSP_006143" description="In isoform 2, isoform 3, isoform 4, isoform 5, isoform 6, isoform 7, isoform 8, isoform 10, isoform 11, isoform 12, isoform 13, isoform 14 and isoform 15." evidence="4 5">
    <original>STEKRPRKKN</original>
    <variation>KHREKAKEEK</variation>
    <location>
        <begin position="289"/>
        <end position="298"/>
    </location>
</feature>
<feature type="splice variant" id="VSP_006144" description="In isoform 4, isoform 6, isoform 10, isoform 11, isoform 12 and isoform 15." evidence="5">
    <location>
        <begin position="304"/>
        <end position="358"/>
    </location>
</feature>
<feature type="splice variant" id="VSP_006145" description="In isoform 2, isoform 3, isoform 5, isoform 7, isoform 8, isoform 13 and isoform 14." evidence="4 5">
    <original>PVLQPDLHAVHPYK</original>
    <variation>LSCNPIYMLFTLIS</variation>
    <location>
        <begin position="312"/>
        <end position="325"/>
    </location>
</feature>
<feature type="splice variant" id="VSP_006146" description="In isoform 9." evidence="5">
    <original>HAVHPYK</original>
    <variation>MLFTLIS</variation>
    <location>
        <begin position="319"/>
        <end position="325"/>
    </location>
</feature>
<feature type="sequence conflict" description="In Ref. 1; BAA11476." evidence="6" ref="1">
    <original>A</original>
    <variation>R</variation>
    <location>
        <position position="391"/>
    </location>
</feature>
<feature type="sequence conflict" description="In Ref. 1; BAA11476." evidence="6" ref="1">
    <original>AC</original>
    <variation>R</variation>
    <location>
        <begin position="588"/>
        <end position="589"/>
    </location>
</feature>
<keyword id="KW-0025">Alternative splicing</keyword>
<keyword id="KW-1003">Cell membrane</keyword>
<keyword id="KW-1015">Disulfide bond</keyword>
<keyword id="KW-0325">Glycoprotein</keyword>
<keyword id="KW-0406">Ion transport</keyword>
<keyword id="KW-0472">Membrane</keyword>
<keyword id="KW-1185">Reference proteome</keyword>
<keyword id="KW-0812">Transmembrane</keyword>
<keyword id="KW-1133">Transmembrane helix</keyword>
<keyword id="KW-0813">Transport</keyword>
<evidence type="ECO:0000255" key="1"/>
<evidence type="ECO:0000255" key="2">
    <source>
        <dbReference type="PROSITE-ProRule" id="PRU00798"/>
    </source>
</evidence>
<evidence type="ECO:0000256" key="3">
    <source>
        <dbReference type="SAM" id="MobiDB-lite"/>
    </source>
</evidence>
<evidence type="ECO:0000303" key="4">
    <source>
    </source>
</evidence>
<evidence type="ECO:0000303" key="5">
    <source>
    </source>
</evidence>
<evidence type="ECO:0000305" key="6"/>
<reference key="1">
    <citation type="journal article" date="1996" name="J. Biol. Chem.">
        <title>Cloning and functional characterization of a novel rat organic anion transporter mediating basolateral uptake of methotrexate in the kidney.</title>
        <authorList>
            <person name="Saito H."/>
            <person name="Masuda S."/>
            <person name="Inui K."/>
        </authorList>
    </citation>
    <scope>NUCLEOTIDE SEQUENCE [MRNA] (ISOFORM 1)</scope>
    <source>
        <strain>Sprague-Dawley</strain>
        <tissue>Kidney</tissue>
    </source>
</reference>
<reference key="2">
    <citation type="journal article" date="1999" name="Mol. Pharmacol.">
        <title>Cloning and functional characterization of a new multispecific organic anion transporter, OAT-K2, in rat kidney.</title>
        <authorList>
            <person name="Masuda S."/>
            <person name="Ibaramoto K."/>
            <person name="Takeuchi A."/>
            <person name="Saito H."/>
            <person name="Hashimoto Y."/>
            <person name="Inui K."/>
        </authorList>
    </citation>
    <scope>NUCLEOTIDE SEQUENCE [MRNA] (ISOFORM 13)</scope>
    <source>
        <tissue>Kidney</tissue>
    </source>
</reference>
<reference key="3">
    <citation type="journal article" date="2002" name="DNA Seq.">
        <title>Cloning and tissue-specific expression of spliced variants of the rat organic anion transporter (rOAT-K).</title>
        <authorList>
            <person name="Wolff M.W."/>
            <person name="Su T.-Z."/>
        </authorList>
    </citation>
    <scope>NUCLEOTIDE SEQUENCE [MRNA] (ISOFORMS 2; 3; 4; 5; 6; 7; 8; 9; 10; 11; 12; 14 AND 15)</scope>
    <source>
        <strain>Sprague-Dawley</strain>
        <tissue>Kidney</tissue>
    </source>
</reference>
<protein>
    <recommendedName>
        <fullName>Solute carrier organic anion transporter family member 1A3</fullName>
    </recommendedName>
    <alternativeName>
        <fullName>OAT-K2</fullName>
    </alternativeName>
    <alternativeName>
        <fullName>Sodium-independent organic anion transporter K1</fullName>
        <shortName>OAT-K1</shortName>
    </alternativeName>
    <alternativeName>
        <fullName>Solute carrier family 21 member 4</fullName>
    </alternativeName>
    <alternativeName>
        <fullName>rOAT-K</fullName>
    </alternativeName>
</protein>
<dbReference type="EMBL" id="D79981">
    <property type="protein sequence ID" value="BAA11476.1"/>
    <property type="molecule type" value="mRNA"/>
</dbReference>
<dbReference type="EMBL" id="AB012662">
    <property type="protein sequence ID" value="BAA77793.1"/>
    <property type="molecule type" value="mRNA"/>
</dbReference>
<dbReference type="EMBL" id="AF445993">
    <property type="protein sequence ID" value="AAL84221.1"/>
    <property type="molecule type" value="mRNA"/>
</dbReference>
<dbReference type="EMBL" id="AF445994">
    <property type="protein sequence ID" value="AAL84222.1"/>
    <property type="molecule type" value="mRNA"/>
</dbReference>
<dbReference type="EMBL" id="AF445995">
    <property type="protein sequence ID" value="AAL84223.1"/>
    <property type="molecule type" value="mRNA"/>
</dbReference>
<dbReference type="EMBL" id="AF445996">
    <property type="protein sequence ID" value="AAL84224.1"/>
    <property type="molecule type" value="mRNA"/>
</dbReference>
<dbReference type="EMBL" id="AF445997">
    <property type="protein sequence ID" value="AAL84225.1"/>
    <property type="molecule type" value="mRNA"/>
</dbReference>
<dbReference type="EMBL" id="AF445998">
    <property type="protein sequence ID" value="AAL84226.1"/>
    <property type="molecule type" value="mRNA"/>
</dbReference>
<dbReference type="EMBL" id="AF445999">
    <property type="protein sequence ID" value="AAL84227.1"/>
    <property type="molecule type" value="mRNA"/>
</dbReference>
<dbReference type="EMBL" id="AF446000">
    <property type="protein sequence ID" value="AAL84228.1"/>
    <property type="molecule type" value="mRNA"/>
</dbReference>
<dbReference type="EMBL" id="AF446001">
    <property type="protein sequence ID" value="AAL84229.1"/>
    <property type="molecule type" value="mRNA"/>
</dbReference>
<dbReference type="EMBL" id="AF446002">
    <property type="protein sequence ID" value="AAL84230.1"/>
    <property type="molecule type" value="mRNA"/>
</dbReference>
<dbReference type="EMBL" id="AF446003">
    <property type="protein sequence ID" value="AAL84231.1"/>
    <property type="molecule type" value="mRNA"/>
</dbReference>
<dbReference type="EMBL" id="AF446004">
    <property type="protein sequence ID" value="AAL84232.1"/>
    <property type="molecule type" value="mRNA"/>
</dbReference>
<dbReference type="EMBL" id="AF446005">
    <property type="protein sequence ID" value="AAL84233.1"/>
    <property type="molecule type" value="mRNA"/>
</dbReference>
<dbReference type="EMBL" id="AF446006">
    <property type="protein sequence ID" value="AAL84234.1"/>
    <property type="molecule type" value="mRNA"/>
</dbReference>
<dbReference type="RefSeq" id="NP_110464.1">
    <molecule id="P70502-2"/>
    <property type="nucleotide sequence ID" value="NM_030837.1"/>
</dbReference>
<dbReference type="RefSeq" id="XP_038964330.1">
    <molecule id="P70502-4"/>
    <property type="nucleotide sequence ID" value="XM_039108402.2"/>
</dbReference>
<dbReference type="RefSeq" id="XP_038964331.1">
    <molecule id="P70502-5"/>
    <property type="nucleotide sequence ID" value="XM_039108403.2"/>
</dbReference>
<dbReference type="RefSeq" id="XP_038964333.1">
    <molecule id="P70502-7"/>
    <property type="nucleotide sequence ID" value="XM_039108405.2"/>
</dbReference>
<dbReference type="RefSeq" id="XP_038964334.1">
    <molecule id="P70502-15"/>
    <property type="nucleotide sequence ID" value="XM_039108406.2"/>
</dbReference>
<dbReference type="RefSeq" id="XP_038964337.1">
    <molecule id="P70502-12"/>
    <property type="nucleotide sequence ID" value="XM_039108409.2"/>
</dbReference>
<dbReference type="RefSeq" id="XP_063142798.1">
    <molecule id="P70502-2"/>
    <property type="nucleotide sequence ID" value="XM_063286728.1"/>
</dbReference>
<dbReference type="SMR" id="P70502"/>
<dbReference type="STRING" id="10116.ENSRNOP00000000026"/>
<dbReference type="BindingDB" id="P70502"/>
<dbReference type="ChEMBL" id="CHEMBL2073707"/>
<dbReference type="TCDB" id="2.A.60.1.4">
    <property type="family name" value="the organo anion transporter (oat) family"/>
</dbReference>
<dbReference type="GlyCosmos" id="P70502">
    <property type="glycosylation" value="4 sites, No reported glycans"/>
</dbReference>
<dbReference type="GlyGen" id="P70502">
    <property type="glycosylation" value="4 sites"/>
</dbReference>
<dbReference type="iPTMnet" id="P70502"/>
<dbReference type="PhosphoSitePlus" id="P70502"/>
<dbReference type="PaxDb" id="10116-ENSRNOP00000015112"/>
<dbReference type="Ensembl" id="ENSRNOT00000000026.7">
    <molecule id="P70502-2"/>
    <property type="protein sequence ID" value="ENSRNOP00000000026.5"/>
    <property type="gene ID" value="ENSRNOG00000010388.9"/>
</dbReference>
<dbReference type="GeneID" id="80899"/>
<dbReference type="KEGG" id="rno:80899"/>
<dbReference type="AGR" id="RGD:621387"/>
<dbReference type="CTD" id="625716"/>
<dbReference type="RGD" id="621387">
    <property type="gene designation" value="Slco1a3"/>
</dbReference>
<dbReference type="VEuPathDB" id="HostDB:ENSRNOG00000030894"/>
<dbReference type="VEuPathDB" id="HostDB:ENSRNOG00000047493"/>
<dbReference type="eggNOG" id="KOG3626">
    <property type="taxonomic scope" value="Eukaryota"/>
</dbReference>
<dbReference type="GeneTree" id="ENSGT01130000278312"/>
<dbReference type="HOGENOM" id="CLU_729505_0_0_1"/>
<dbReference type="InParanoid" id="P70502"/>
<dbReference type="OMA" id="SHNTEAN"/>
<dbReference type="PhylomeDB" id="P70502"/>
<dbReference type="TreeFam" id="TF317540"/>
<dbReference type="PRO" id="PR:P70502"/>
<dbReference type="Proteomes" id="UP000002494">
    <property type="component" value="Chromosome 4"/>
</dbReference>
<dbReference type="Bgee" id="ENSRNOG00000010388">
    <property type="expression patterns" value="Expressed in adult mammalian kidney and 8 other cell types or tissues"/>
</dbReference>
<dbReference type="ExpressionAtlas" id="P70502">
    <property type="expression patterns" value="baseline and differential"/>
</dbReference>
<dbReference type="GO" id="GO:0016323">
    <property type="term" value="C:basolateral plasma membrane"/>
    <property type="evidence" value="ECO:0000318"/>
    <property type="project" value="GO_Central"/>
</dbReference>
<dbReference type="GO" id="GO:0015125">
    <property type="term" value="F:bile acid transmembrane transporter activity"/>
    <property type="evidence" value="ECO:0000318"/>
    <property type="project" value="GO_Central"/>
</dbReference>
<dbReference type="GO" id="GO:0008514">
    <property type="term" value="F:organic anion transmembrane transporter activity"/>
    <property type="evidence" value="ECO:0000314"/>
    <property type="project" value="RGD"/>
</dbReference>
<dbReference type="GO" id="GO:0015347">
    <property type="term" value="F:sodium-independent organic anion transmembrane transporter activity"/>
    <property type="evidence" value="ECO:0000318"/>
    <property type="project" value="GO_Central"/>
</dbReference>
<dbReference type="GO" id="GO:0015721">
    <property type="term" value="P:bile acid and bile salt transport"/>
    <property type="evidence" value="ECO:0000318"/>
    <property type="project" value="GO_Central"/>
</dbReference>
<dbReference type="GO" id="GO:0098656">
    <property type="term" value="P:monoatomic anion transmembrane transport"/>
    <property type="evidence" value="ECO:0000314"/>
    <property type="project" value="RGD"/>
</dbReference>
<dbReference type="GO" id="GO:0043252">
    <property type="term" value="P:sodium-independent organic anion transport"/>
    <property type="evidence" value="ECO:0000318"/>
    <property type="project" value="GO_Central"/>
</dbReference>
<dbReference type="FunFam" id="1.20.1250.20:FF:000210">
    <property type="entry name" value="Solute carrier organic anion transporter family member"/>
    <property type="match status" value="1"/>
</dbReference>
<dbReference type="Gene3D" id="1.20.1250.20">
    <property type="entry name" value="MFS general substrate transporter like domains"/>
    <property type="match status" value="1"/>
</dbReference>
<dbReference type="InterPro" id="IPR002350">
    <property type="entry name" value="Kazal_dom"/>
</dbReference>
<dbReference type="InterPro" id="IPR036058">
    <property type="entry name" value="Kazal_dom_sf"/>
</dbReference>
<dbReference type="InterPro" id="IPR036259">
    <property type="entry name" value="MFS_trans_sf"/>
</dbReference>
<dbReference type="InterPro" id="IPR004156">
    <property type="entry name" value="OATP"/>
</dbReference>
<dbReference type="NCBIfam" id="TIGR00805">
    <property type="entry name" value="oat"/>
    <property type="match status" value="1"/>
</dbReference>
<dbReference type="PANTHER" id="PTHR11388">
    <property type="entry name" value="ORGANIC ANION TRANSPORTER"/>
    <property type="match status" value="1"/>
</dbReference>
<dbReference type="PANTHER" id="PTHR11388:SF16">
    <property type="entry name" value="SOLUTE CARRIER ORGANIC ANION TRANSPORTER FAMILY MEMBER 1A2"/>
    <property type="match status" value="1"/>
</dbReference>
<dbReference type="Pfam" id="PF07648">
    <property type="entry name" value="Kazal_2"/>
    <property type="match status" value="1"/>
</dbReference>
<dbReference type="Pfam" id="PF03137">
    <property type="entry name" value="OATP"/>
    <property type="match status" value="1"/>
</dbReference>
<dbReference type="SUPFAM" id="SSF100895">
    <property type="entry name" value="Kazal-type serine protease inhibitors"/>
    <property type="match status" value="1"/>
</dbReference>
<dbReference type="SUPFAM" id="SSF103473">
    <property type="entry name" value="MFS general substrate transporter"/>
    <property type="match status" value="1"/>
</dbReference>
<dbReference type="PROSITE" id="PS51465">
    <property type="entry name" value="KAZAL_2"/>
    <property type="match status" value="1"/>
</dbReference>